<reference key="1">
    <citation type="submission" date="2008-06" db="EMBL/GenBank/DDBJ databases">
        <title>Complete sequence of Stenotrophomonas maltophilia R551-3.</title>
        <authorList>
            <consortium name="US DOE Joint Genome Institute"/>
            <person name="Lucas S."/>
            <person name="Copeland A."/>
            <person name="Lapidus A."/>
            <person name="Glavina del Rio T."/>
            <person name="Dalin E."/>
            <person name="Tice H."/>
            <person name="Pitluck S."/>
            <person name="Chain P."/>
            <person name="Malfatti S."/>
            <person name="Shin M."/>
            <person name="Vergez L."/>
            <person name="Lang D."/>
            <person name="Schmutz J."/>
            <person name="Larimer F."/>
            <person name="Land M."/>
            <person name="Hauser L."/>
            <person name="Kyrpides N."/>
            <person name="Mikhailova N."/>
            <person name="Taghavi S."/>
            <person name="Monchy S."/>
            <person name="Newman L."/>
            <person name="Vangronsveld J."/>
            <person name="van der Lelie D."/>
            <person name="Richardson P."/>
        </authorList>
    </citation>
    <scope>NUCLEOTIDE SEQUENCE [LARGE SCALE GENOMIC DNA]</scope>
    <source>
        <strain>R551-3</strain>
    </source>
</reference>
<dbReference type="EMBL" id="CP001111">
    <property type="protein sequence ID" value="ACF52288.1"/>
    <property type="molecule type" value="Genomic_DNA"/>
</dbReference>
<dbReference type="RefSeq" id="WP_005926280.1">
    <property type="nucleotide sequence ID" value="NC_011071.1"/>
</dbReference>
<dbReference type="SMR" id="B4SP93"/>
<dbReference type="STRING" id="391008.Smal_2588"/>
<dbReference type="KEGG" id="smt:Smal_2588"/>
<dbReference type="eggNOG" id="COG0238">
    <property type="taxonomic scope" value="Bacteria"/>
</dbReference>
<dbReference type="HOGENOM" id="CLU_148710_2_3_6"/>
<dbReference type="OrthoDB" id="9812008at2"/>
<dbReference type="Proteomes" id="UP000001867">
    <property type="component" value="Chromosome"/>
</dbReference>
<dbReference type="GO" id="GO:0022627">
    <property type="term" value="C:cytosolic small ribosomal subunit"/>
    <property type="evidence" value="ECO:0007669"/>
    <property type="project" value="TreeGrafter"/>
</dbReference>
<dbReference type="GO" id="GO:0070181">
    <property type="term" value="F:small ribosomal subunit rRNA binding"/>
    <property type="evidence" value="ECO:0007669"/>
    <property type="project" value="TreeGrafter"/>
</dbReference>
<dbReference type="GO" id="GO:0003735">
    <property type="term" value="F:structural constituent of ribosome"/>
    <property type="evidence" value="ECO:0007669"/>
    <property type="project" value="InterPro"/>
</dbReference>
<dbReference type="GO" id="GO:0006412">
    <property type="term" value="P:translation"/>
    <property type="evidence" value="ECO:0007669"/>
    <property type="project" value="UniProtKB-UniRule"/>
</dbReference>
<dbReference type="FunFam" id="4.10.640.10:FF:000001">
    <property type="entry name" value="30S ribosomal protein S18"/>
    <property type="match status" value="1"/>
</dbReference>
<dbReference type="Gene3D" id="4.10.640.10">
    <property type="entry name" value="Ribosomal protein S18"/>
    <property type="match status" value="1"/>
</dbReference>
<dbReference type="HAMAP" id="MF_00270">
    <property type="entry name" value="Ribosomal_bS18"/>
    <property type="match status" value="1"/>
</dbReference>
<dbReference type="InterPro" id="IPR001648">
    <property type="entry name" value="Ribosomal_bS18"/>
</dbReference>
<dbReference type="InterPro" id="IPR018275">
    <property type="entry name" value="Ribosomal_bS18_CS"/>
</dbReference>
<dbReference type="InterPro" id="IPR036870">
    <property type="entry name" value="Ribosomal_bS18_sf"/>
</dbReference>
<dbReference type="NCBIfam" id="TIGR00165">
    <property type="entry name" value="S18"/>
    <property type="match status" value="1"/>
</dbReference>
<dbReference type="PANTHER" id="PTHR13479">
    <property type="entry name" value="30S RIBOSOMAL PROTEIN S18"/>
    <property type="match status" value="1"/>
</dbReference>
<dbReference type="PANTHER" id="PTHR13479:SF40">
    <property type="entry name" value="SMALL RIBOSOMAL SUBUNIT PROTEIN BS18M"/>
    <property type="match status" value="1"/>
</dbReference>
<dbReference type="Pfam" id="PF01084">
    <property type="entry name" value="Ribosomal_S18"/>
    <property type="match status" value="1"/>
</dbReference>
<dbReference type="PRINTS" id="PR00974">
    <property type="entry name" value="RIBOSOMALS18"/>
</dbReference>
<dbReference type="SUPFAM" id="SSF46911">
    <property type="entry name" value="Ribosomal protein S18"/>
    <property type="match status" value="1"/>
</dbReference>
<dbReference type="PROSITE" id="PS00057">
    <property type="entry name" value="RIBOSOMAL_S18"/>
    <property type="match status" value="1"/>
</dbReference>
<protein>
    <recommendedName>
        <fullName evidence="1">Small ribosomal subunit protein bS18</fullName>
    </recommendedName>
    <alternativeName>
        <fullName evidence="2">30S ribosomal protein S18</fullName>
    </alternativeName>
</protein>
<gene>
    <name evidence="1" type="primary">rpsR</name>
    <name type="ordered locus">Smal_2588</name>
</gene>
<feature type="chain" id="PRO_1000114454" description="Small ribosomal subunit protein bS18">
    <location>
        <begin position="1"/>
        <end position="76"/>
    </location>
</feature>
<sequence>MSKFFRRRKFCKFTAEGVKEIDYKDLNTLRQYLTENGKIVPSRVTGTKSKYQRQLATAVKRARFLALIPYTDNHDI</sequence>
<accession>B4SP93</accession>
<organism>
    <name type="scientific">Stenotrophomonas maltophilia (strain R551-3)</name>
    <dbReference type="NCBI Taxonomy" id="391008"/>
    <lineage>
        <taxon>Bacteria</taxon>
        <taxon>Pseudomonadati</taxon>
        <taxon>Pseudomonadota</taxon>
        <taxon>Gammaproteobacteria</taxon>
        <taxon>Lysobacterales</taxon>
        <taxon>Lysobacteraceae</taxon>
        <taxon>Stenotrophomonas</taxon>
        <taxon>Stenotrophomonas maltophilia group</taxon>
    </lineage>
</organism>
<proteinExistence type="inferred from homology"/>
<evidence type="ECO:0000255" key="1">
    <source>
        <dbReference type="HAMAP-Rule" id="MF_00270"/>
    </source>
</evidence>
<evidence type="ECO:0000305" key="2"/>
<name>RS18_STRM5</name>
<keyword id="KW-0687">Ribonucleoprotein</keyword>
<keyword id="KW-0689">Ribosomal protein</keyword>
<keyword id="KW-0694">RNA-binding</keyword>
<keyword id="KW-0699">rRNA-binding</keyword>
<comment type="function">
    <text evidence="1">Binds as a heterodimer with protein bS6 to the central domain of the 16S rRNA, where it helps stabilize the platform of the 30S subunit.</text>
</comment>
<comment type="subunit">
    <text evidence="1">Part of the 30S ribosomal subunit. Forms a tight heterodimer with protein bS6.</text>
</comment>
<comment type="similarity">
    <text evidence="1">Belongs to the bacterial ribosomal protein bS18 family.</text>
</comment>